<reference key="1">
    <citation type="journal article" date="2011" name="J. Bacteriol.">
        <title>Comparative genomics of 28 Salmonella enterica isolates: evidence for CRISPR-mediated adaptive sublineage evolution.</title>
        <authorList>
            <person name="Fricke W.F."/>
            <person name="Mammel M.K."/>
            <person name="McDermott P.F."/>
            <person name="Tartera C."/>
            <person name="White D.G."/>
            <person name="Leclerc J.E."/>
            <person name="Ravel J."/>
            <person name="Cebula T.A."/>
        </authorList>
    </citation>
    <scope>NUCLEOTIDE SEQUENCE [LARGE SCALE GENOMIC DNA]</scope>
    <source>
        <strain>SL476</strain>
    </source>
</reference>
<protein>
    <recommendedName>
        <fullName evidence="1">Sulfurtransferase TusD</fullName>
        <ecNumber evidence="1">2.8.1.-</ecNumber>
    </recommendedName>
    <alternativeName>
        <fullName evidence="1">tRNA 2-thiouridine synthesizing protein D</fullName>
    </alternativeName>
</protein>
<dbReference type="EC" id="2.8.1.-" evidence="1"/>
<dbReference type="EMBL" id="CP001120">
    <property type="protein sequence ID" value="ACF67767.1"/>
    <property type="molecule type" value="Genomic_DNA"/>
</dbReference>
<dbReference type="RefSeq" id="WP_001268010.1">
    <property type="nucleotide sequence ID" value="NC_011083.1"/>
</dbReference>
<dbReference type="SMR" id="B4TKM6"/>
<dbReference type="KEGG" id="seh:SeHA_C3756"/>
<dbReference type="HOGENOM" id="CLU_132095_0_0_6"/>
<dbReference type="Proteomes" id="UP000001866">
    <property type="component" value="Chromosome"/>
</dbReference>
<dbReference type="GO" id="GO:1990228">
    <property type="term" value="C:sulfurtransferase complex"/>
    <property type="evidence" value="ECO:0007669"/>
    <property type="project" value="TreeGrafter"/>
</dbReference>
<dbReference type="GO" id="GO:0097163">
    <property type="term" value="F:sulfur carrier activity"/>
    <property type="evidence" value="ECO:0007669"/>
    <property type="project" value="TreeGrafter"/>
</dbReference>
<dbReference type="GO" id="GO:0016783">
    <property type="term" value="F:sulfurtransferase activity"/>
    <property type="evidence" value="ECO:0007669"/>
    <property type="project" value="UniProtKB-UniRule"/>
</dbReference>
<dbReference type="GO" id="GO:0002143">
    <property type="term" value="P:tRNA wobble position uridine thiolation"/>
    <property type="evidence" value="ECO:0007669"/>
    <property type="project" value="TreeGrafter"/>
</dbReference>
<dbReference type="FunFam" id="3.40.1260.10:FF:000001">
    <property type="entry name" value="Sulfurtransferase TusD"/>
    <property type="match status" value="1"/>
</dbReference>
<dbReference type="Gene3D" id="3.40.1260.10">
    <property type="entry name" value="DsrEFH-like"/>
    <property type="match status" value="1"/>
</dbReference>
<dbReference type="HAMAP" id="MF_00390">
    <property type="entry name" value="Thiourid_synth_D"/>
    <property type="match status" value="1"/>
</dbReference>
<dbReference type="InterPro" id="IPR027396">
    <property type="entry name" value="DsrEFH-like"/>
</dbReference>
<dbReference type="InterPro" id="IPR003787">
    <property type="entry name" value="Sulphur_relay_DsrE/F-like"/>
</dbReference>
<dbReference type="InterPro" id="IPR017463">
    <property type="entry name" value="Sulphur_relay_TusD/DsrE"/>
</dbReference>
<dbReference type="NCBIfam" id="NF001237">
    <property type="entry name" value="PRK00207.1"/>
    <property type="match status" value="1"/>
</dbReference>
<dbReference type="NCBIfam" id="TIGR03012">
    <property type="entry name" value="sulf_tusD_dsrE"/>
    <property type="match status" value="1"/>
</dbReference>
<dbReference type="PANTHER" id="PTHR34874">
    <property type="entry name" value="PROTEIN YCHN"/>
    <property type="match status" value="1"/>
</dbReference>
<dbReference type="PANTHER" id="PTHR34874:SF3">
    <property type="entry name" value="SULFURTRANSFERASE TUSD"/>
    <property type="match status" value="1"/>
</dbReference>
<dbReference type="Pfam" id="PF02635">
    <property type="entry name" value="DsrE"/>
    <property type="match status" value="1"/>
</dbReference>
<dbReference type="SUPFAM" id="SSF75169">
    <property type="entry name" value="DsrEFH-like"/>
    <property type="match status" value="1"/>
</dbReference>
<evidence type="ECO:0000255" key="1">
    <source>
        <dbReference type="HAMAP-Rule" id="MF_00390"/>
    </source>
</evidence>
<sequence>MRYAIMVTGPAYGTQQASSALQFAHALLNEGHELASVFFYREGVYNANLLTSPASDEYDLVRAWQKLNTQHGVALNICVAAALRRGIIDETEAGRLALPSANLQPGFTLSGLGALAEASLTCDRVVQF</sequence>
<organism>
    <name type="scientific">Salmonella heidelberg (strain SL476)</name>
    <dbReference type="NCBI Taxonomy" id="454169"/>
    <lineage>
        <taxon>Bacteria</taxon>
        <taxon>Pseudomonadati</taxon>
        <taxon>Pseudomonadota</taxon>
        <taxon>Gammaproteobacteria</taxon>
        <taxon>Enterobacterales</taxon>
        <taxon>Enterobacteriaceae</taxon>
        <taxon>Salmonella</taxon>
    </lineage>
</organism>
<gene>
    <name evidence="1" type="primary">tusD</name>
    <name type="ordered locus">SeHA_C3756</name>
</gene>
<comment type="function">
    <text evidence="1">Part of a sulfur-relay system required for 2-thiolation of 5-methylaminomethyl-2-thiouridine (mnm(5)s(2)U) at tRNA wobble positions. Accepts sulfur from TusA and transfers it in turn to TusE.</text>
</comment>
<comment type="subunit">
    <text evidence="1">Heterohexamer, formed by a dimer of trimers. The hexameric TusBCD complex contains 2 copies each of TusB, TusC and TusD. The TusBCD complex interacts with TusE.</text>
</comment>
<comment type="subcellular location">
    <subcellularLocation>
        <location evidence="1">Cytoplasm</location>
    </subcellularLocation>
</comment>
<comment type="similarity">
    <text evidence="1">Belongs to the DsrE/TusD family.</text>
</comment>
<keyword id="KW-0963">Cytoplasm</keyword>
<keyword id="KW-0808">Transferase</keyword>
<keyword id="KW-0819">tRNA processing</keyword>
<proteinExistence type="inferred from homology"/>
<feature type="chain" id="PRO_1000122871" description="Sulfurtransferase TusD">
    <location>
        <begin position="1"/>
        <end position="128"/>
    </location>
</feature>
<feature type="active site" description="Cysteine persulfide intermediate" evidence="1">
    <location>
        <position position="78"/>
    </location>
</feature>
<name>TUSD_SALHS</name>
<accession>B4TKM6</accession>